<name>CYB_ABRAN</name>
<geneLocation type="mitochondrion"/>
<feature type="chain" id="PRO_0000254969" description="Cytochrome b">
    <location>
        <begin position="1"/>
        <end position="381"/>
    </location>
</feature>
<feature type="transmembrane region" description="Helical" evidence="2">
    <location>
        <begin position="33"/>
        <end position="53"/>
    </location>
</feature>
<feature type="transmembrane region" description="Helical" evidence="2">
    <location>
        <begin position="77"/>
        <end position="98"/>
    </location>
</feature>
<feature type="transmembrane region" description="Helical" evidence="2">
    <location>
        <begin position="113"/>
        <end position="133"/>
    </location>
</feature>
<feature type="transmembrane region" description="Helical" evidence="2">
    <location>
        <begin position="178"/>
        <end position="198"/>
    </location>
</feature>
<feature type="transmembrane region" description="Helical" evidence="2">
    <location>
        <begin position="226"/>
        <end position="246"/>
    </location>
</feature>
<feature type="transmembrane region" description="Helical" evidence="2">
    <location>
        <begin position="288"/>
        <end position="308"/>
    </location>
</feature>
<feature type="transmembrane region" description="Helical" evidence="2">
    <location>
        <begin position="320"/>
        <end position="340"/>
    </location>
</feature>
<feature type="transmembrane region" description="Helical" evidence="2">
    <location>
        <begin position="347"/>
        <end position="367"/>
    </location>
</feature>
<feature type="binding site" description="axial binding residue" evidence="2">
    <location>
        <position position="83"/>
    </location>
    <ligand>
        <name>heme b</name>
        <dbReference type="ChEBI" id="CHEBI:60344"/>
        <label>b562</label>
    </ligand>
    <ligandPart>
        <name>Fe</name>
        <dbReference type="ChEBI" id="CHEBI:18248"/>
    </ligandPart>
</feature>
<feature type="binding site" description="axial binding residue" evidence="2">
    <location>
        <position position="97"/>
    </location>
    <ligand>
        <name>heme b</name>
        <dbReference type="ChEBI" id="CHEBI:60344"/>
        <label>b566</label>
    </ligand>
    <ligandPart>
        <name>Fe</name>
        <dbReference type="ChEBI" id="CHEBI:18248"/>
    </ligandPart>
</feature>
<feature type="binding site" description="axial binding residue" evidence="2">
    <location>
        <position position="182"/>
    </location>
    <ligand>
        <name>heme b</name>
        <dbReference type="ChEBI" id="CHEBI:60344"/>
        <label>b562</label>
    </ligand>
    <ligandPart>
        <name>Fe</name>
        <dbReference type="ChEBI" id="CHEBI:18248"/>
    </ligandPart>
</feature>
<feature type="binding site" description="axial binding residue" evidence="2">
    <location>
        <position position="196"/>
    </location>
    <ligand>
        <name>heme b</name>
        <dbReference type="ChEBI" id="CHEBI:60344"/>
        <label>b566</label>
    </ligand>
    <ligandPart>
        <name>Fe</name>
        <dbReference type="ChEBI" id="CHEBI:18248"/>
    </ligandPart>
</feature>
<feature type="binding site" evidence="2">
    <location>
        <position position="201"/>
    </location>
    <ligand>
        <name>a ubiquinone</name>
        <dbReference type="ChEBI" id="CHEBI:16389"/>
    </ligand>
</feature>
<proteinExistence type="inferred from homology"/>
<reference key="1">
    <citation type="journal article" date="1999" name="J. Mammal. Evol.">
        <title>Phylogenetic relationships and the radiation of Sigmodontine rodents in South America: evidence from cytochrome b.</title>
        <authorList>
            <person name="Smith M.F."/>
            <person name="Patton J.L."/>
        </authorList>
    </citation>
    <scope>NUCLEOTIDE SEQUENCE [GENOMIC DNA]</scope>
</reference>
<reference key="2">
    <citation type="journal article" date="1993" name="Biol. J. Linn. Soc. Lond.">
        <title>The diversification of South American murid rodents: evidence from mitochondrial DNA sequence data for the akodontine tribe.</title>
        <authorList>
            <person name="Smith M.F."/>
            <person name="Patton J.L."/>
        </authorList>
    </citation>
    <scope>NUCLEOTIDE SEQUENCE [GENOMIC DNA] OF 1-267</scope>
    <source>
        <tissue>Liver</tissue>
    </source>
</reference>
<reference key="3">
    <citation type="journal article" date="1991" name="Mol. Biol. Evol.">
        <title>Variation in mitochondrial cytochrome b sequence in natural populations of South American akodontine rodents (Muridae: Sigmodontinae).</title>
        <authorList>
            <person name="Smith M.F."/>
            <person name="Patton J.L."/>
        </authorList>
    </citation>
    <scope>NUCLEOTIDE SEQUENCE [GENOMIC DNA] OF 1-133</scope>
    <source>
        <strain>Isolate MVZ 174062</strain>
        <strain>Isolate MVZ 174063</strain>
        <tissue>Liver</tissue>
    </source>
</reference>
<accession>Q9XNX3</accession>
<accession>P21713</accession>
<protein>
    <recommendedName>
        <fullName>Cytochrome b</fullName>
    </recommendedName>
    <alternativeName>
        <fullName>Complex III subunit 3</fullName>
    </alternativeName>
    <alternativeName>
        <fullName>Complex III subunit III</fullName>
    </alternativeName>
    <alternativeName>
        <fullName>Cytochrome b-c1 complex subunit 3</fullName>
    </alternativeName>
    <alternativeName>
        <fullName>Ubiquinol-cytochrome-c reductase complex cytochrome b subunit</fullName>
    </alternativeName>
</protein>
<dbReference type="EMBL" id="AF108671">
    <property type="protein sequence ID" value="AAD45453.1"/>
    <property type="molecule type" value="Genomic_DNA"/>
</dbReference>
<dbReference type="EMBL" id="M35713">
    <property type="protein sequence ID" value="AAA16999.1"/>
    <property type="molecule type" value="Genomic_DNA"/>
</dbReference>
<dbReference type="PIR" id="B41824">
    <property type="entry name" value="B41824"/>
</dbReference>
<dbReference type="SMR" id="Q9XNX3"/>
<dbReference type="GO" id="GO:0005743">
    <property type="term" value="C:mitochondrial inner membrane"/>
    <property type="evidence" value="ECO:0007669"/>
    <property type="project" value="UniProtKB-SubCell"/>
</dbReference>
<dbReference type="GO" id="GO:0045275">
    <property type="term" value="C:respiratory chain complex III"/>
    <property type="evidence" value="ECO:0007669"/>
    <property type="project" value="InterPro"/>
</dbReference>
<dbReference type="GO" id="GO:0046872">
    <property type="term" value="F:metal ion binding"/>
    <property type="evidence" value="ECO:0007669"/>
    <property type="project" value="UniProtKB-KW"/>
</dbReference>
<dbReference type="GO" id="GO:0008121">
    <property type="term" value="F:ubiquinol-cytochrome-c reductase activity"/>
    <property type="evidence" value="ECO:0007669"/>
    <property type="project" value="InterPro"/>
</dbReference>
<dbReference type="GO" id="GO:0006122">
    <property type="term" value="P:mitochondrial electron transport, ubiquinol to cytochrome c"/>
    <property type="evidence" value="ECO:0007669"/>
    <property type="project" value="TreeGrafter"/>
</dbReference>
<dbReference type="CDD" id="cd00290">
    <property type="entry name" value="cytochrome_b_C"/>
    <property type="match status" value="1"/>
</dbReference>
<dbReference type="CDD" id="cd00284">
    <property type="entry name" value="Cytochrome_b_N"/>
    <property type="match status" value="1"/>
</dbReference>
<dbReference type="FunFam" id="1.20.810.10:FF:000002">
    <property type="entry name" value="Cytochrome b"/>
    <property type="match status" value="1"/>
</dbReference>
<dbReference type="Gene3D" id="1.20.810.10">
    <property type="entry name" value="Cytochrome Bc1 Complex, Chain C"/>
    <property type="match status" value="1"/>
</dbReference>
<dbReference type="InterPro" id="IPR005798">
    <property type="entry name" value="Cyt_b/b6_C"/>
</dbReference>
<dbReference type="InterPro" id="IPR036150">
    <property type="entry name" value="Cyt_b/b6_C_sf"/>
</dbReference>
<dbReference type="InterPro" id="IPR005797">
    <property type="entry name" value="Cyt_b/b6_N"/>
</dbReference>
<dbReference type="InterPro" id="IPR027387">
    <property type="entry name" value="Cytb/b6-like_sf"/>
</dbReference>
<dbReference type="InterPro" id="IPR030689">
    <property type="entry name" value="Cytochrome_b"/>
</dbReference>
<dbReference type="InterPro" id="IPR048260">
    <property type="entry name" value="Cytochrome_b_C_euk/bac"/>
</dbReference>
<dbReference type="InterPro" id="IPR048259">
    <property type="entry name" value="Cytochrome_b_N_euk/bac"/>
</dbReference>
<dbReference type="InterPro" id="IPR016174">
    <property type="entry name" value="Di-haem_cyt_TM"/>
</dbReference>
<dbReference type="PANTHER" id="PTHR19271">
    <property type="entry name" value="CYTOCHROME B"/>
    <property type="match status" value="1"/>
</dbReference>
<dbReference type="PANTHER" id="PTHR19271:SF16">
    <property type="entry name" value="CYTOCHROME B"/>
    <property type="match status" value="1"/>
</dbReference>
<dbReference type="Pfam" id="PF00032">
    <property type="entry name" value="Cytochrom_B_C"/>
    <property type="match status" value="1"/>
</dbReference>
<dbReference type="Pfam" id="PF00033">
    <property type="entry name" value="Cytochrome_B"/>
    <property type="match status" value="1"/>
</dbReference>
<dbReference type="PIRSF" id="PIRSF038885">
    <property type="entry name" value="COB"/>
    <property type="match status" value="1"/>
</dbReference>
<dbReference type="SUPFAM" id="SSF81648">
    <property type="entry name" value="a domain/subunit of cytochrome bc1 complex (Ubiquinol-cytochrome c reductase)"/>
    <property type="match status" value="1"/>
</dbReference>
<dbReference type="SUPFAM" id="SSF81342">
    <property type="entry name" value="Transmembrane di-heme cytochromes"/>
    <property type="match status" value="1"/>
</dbReference>
<dbReference type="PROSITE" id="PS51003">
    <property type="entry name" value="CYTB_CTER"/>
    <property type="match status" value="1"/>
</dbReference>
<dbReference type="PROSITE" id="PS51002">
    <property type="entry name" value="CYTB_NTER"/>
    <property type="match status" value="1"/>
</dbReference>
<evidence type="ECO:0000250" key="1"/>
<evidence type="ECO:0000250" key="2">
    <source>
        <dbReference type="UniProtKB" id="P00157"/>
    </source>
</evidence>
<evidence type="ECO:0000255" key="3">
    <source>
        <dbReference type="PROSITE-ProRule" id="PRU00967"/>
    </source>
</evidence>
<evidence type="ECO:0000255" key="4">
    <source>
        <dbReference type="PROSITE-ProRule" id="PRU00968"/>
    </source>
</evidence>
<comment type="function">
    <text evidence="2">Component of the ubiquinol-cytochrome c reductase complex (complex III or cytochrome b-c1 complex) that is part of the mitochondrial respiratory chain. The b-c1 complex mediates electron transfer from ubiquinol to cytochrome c. Contributes to the generation of a proton gradient across the mitochondrial membrane that is then used for ATP synthesis.</text>
</comment>
<comment type="cofactor">
    <cofactor evidence="2">
        <name>heme b</name>
        <dbReference type="ChEBI" id="CHEBI:60344"/>
    </cofactor>
    <text evidence="2">Binds 2 heme b groups non-covalently.</text>
</comment>
<comment type="subunit">
    <text evidence="2">The cytochrome bc1 complex contains 11 subunits: 3 respiratory subunits (MT-CYB, CYC1 and UQCRFS1), 2 core proteins (UQCRC1 and UQCRC2) and 6 low-molecular weight proteins (UQCRH/QCR6, UQCRB/QCR7, UQCRQ/QCR8, UQCR10/QCR9, UQCR11/QCR10 and a cleavage product of UQCRFS1). This cytochrome bc1 complex then forms a dimer.</text>
</comment>
<comment type="subcellular location">
    <subcellularLocation>
        <location evidence="2">Mitochondrion inner membrane</location>
        <topology evidence="2">Multi-pass membrane protein</topology>
    </subcellularLocation>
</comment>
<comment type="miscellaneous">
    <text evidence="1">Heme 1 (or BL or b562) is low-potential and absorbs at about 562 nm, and heme 2 (or BH or b566) is high-potential and absorbs at about 566 nm.</text>
</comment>
<comment type="similarity">
    <text evidence="3 4">Belongs to the cytochrome b family.</text>
</comment>
<comment type="caution">
    <text evidence="2">The full-length protein contains only eight transmembrane helices, not nine as predicted by bioinformatics tools.</text>
</comment>
<sequence>MTIMRKTHPLLKIINHSFIDLPAPSNISSWWNFGSLLGICLMIQILTGLFLAMHYTSDTATAFSSVTHICRDVNYGWLIRYLHANGASMFFICMFIHVGRGIYYGSYMLSETWNIGIILLLTTMATAFVGYVLPWGQMSFWGATVITNLLSAIPYIGTSLVEWIWGGFSVDKATLTRFFAFHFILPFIITAFVLVHLLFLHETGSNNPSGLNSNSDKIPFHPYYTIKDLLGVIFLLMVLMILVLFFPDVLGDPDNYTPANPLNTPAHIKPEWYFLFAYAILRSIPNKLGGVLALVLSILILATFPLLKSSKQHGLMYRPITQTLYWVFISNLLILTWIGGQPVEYPFTTIGQIASISYFTIIVILMPIANMIENNILKLYY</sequence>
<keyword id="KW-0249">Electron transport</keyword>
<keyword id="KW-0349">Heme</keyword>
<keyword id="KW-0408">Iron</keyword>
<keyword id="KW-0472">Membrane</keyword>
<keyword id="KW-0479">Metal-binding</keyword>
<keyword id="KW-0496">Mitochondrion</keyword>
<keyword id="KW-0999">Mitochondrion inner membrane</keyword>
<keyword id="KW-0679">Respiratory chain</keyword>
<keyword id="KW-0812">Transmembrane</keyword>
<keyword id="KW-1133">Transmembrane helix</keyword>
<keyword id="KW-0813">Transport</keyword>
<keyword id="KW-0830">Ubiquinone</keyword>
<gene>
    <name type="primary">MT-CYB</name>
    <name type="synonym">COB</name>
    <name type="synonym">CYTB</name>
    <name type="synonym">MTCYB</name>
</gene>
<organism>
    <name type="scientific">Abrothrix andina</name>
    <name type="common">Andean Altiplano mouse</name>
    <name type="synonym">Mus andinus</name>
    <dbReference type="NCBI Taxonomy" id="89096"/>
    <lineage>
        <taxon>Eukaryota</taxon>
        <taxon>Metazoa</taxon>
        <taxon>Chordata</taxon>
        <taxon>Craniata</taxon>
        <taxon>Vertebrata</taxon>
        <taxon>Euteleostomi</taxon>
        <taxon>Mammalia</taxon>
        <taxon>Eutheria</taxon>
        <taxon>Euarchontoglires</taxon>
        <taxon>Glires</taxon>
        <taxon>Rodentia</taxon>
        <taxon>Myomorpha</taxon>
        <taxon>Muroidea</taxon>
        <taxon>Cricetidae</taxon>
        <taxon>Sigmodontinae</taxon>
        <taxon>Abrothrix</taxon>
    </lineage>
</organism>